<gene>
    <name evidence="1" type="primary">gM</name>
    <name type="ORF">UL10</name>
</gene>
<organism>
    <name type="scientific">Psittacid herpesvirus 1 (isolate Amazon parrot/-/97-0001/1997)</name>
    <name type="common">PsHV-1</name>
    <name type="synonym">Pacheco's disease virus</name>
    <dbReference type="NCBI Taxonomy" id="670426"/>
    <lineage>
        <taxon>Viruses</taxon>
        <taxon>Duplodnaviria</taxon>
        <taxon>Heunggongvirae</taxon>
        <taxon>Peploviricota</taxon>
        <taxon>Herviviricetes</taxon>
        <taxon>Herpesvirales</taxon>
        <taxon>Orthoherpesviridae</taxon>
        <taxon>Alphaherpesvirinae</taxon>
        <taxon>Iltovirus</taxon>
        <taxon>Iltovirus psittacidalpha1</taxon>
        <taxon>Psittacid alphaherpesvirus 1</taxon>
    </lineage>
</organism>
<evidence type="ECO:0000255" key="1">
    <source>
        <dbReference type="HAMAP-Rule" id="MF_04035"/>
    </source>
</evidence>
<keyword id="KW-1015">Disulfide bond</keyword>
<keyword id="KW-0325">Glycoprotein</keyword>
<keyword id="KW-1039">Host endosome</keyword>
<keyword id="KW-1040">Host Golgi apparatus</keyword>
<keyword id="KW-1043">Host membrane</keyword>
<keyword id="KW-1048">Host nucleus</keyword>
<keyword id="KW-0472">Membrane</keyword>
<keyword id="KW-1185">Reference proteome</keyword>
<keyword id="KW-0812">Transmembrane</keyword>
<keyword id="KW-1133">Transmembrane helix</keyword>
<keyword id="KW-0261">Viral envelope protein</keyword>
<keyword id="KW-0946">Virion</keyword>
<organismHost>
    <name type="scientific">Amazona oratrix</name>
    <name type="common">yellow-headed parrot</name>
    <dbReference type="NCBI Taxonomy" id="152276"/>
</organismHost>
<name>GM_PSHV1</name>
<sequence>MGNYYYGGQESRLERISWRMWMVEAACYIVLVLLTLVSSFASLSSTTGFPCFVGTVGESSFGGDLMGHGMTPARRDGVKIFFMSSPSTLFVVFSAVFVWLVVAVYLLLGGVRVKMCNFDSSYGASELSSAVATMTSLVTLSITAWAWQVFVLMLSYRQLTLAAVAFVGIFIAGLVFMLSFASGGKSPENYATFNSQLKTVCKDVHAVITAFKAVVLNLFCVVFGVWHLMLVMLGAVIMVLNFGVSIPKATTGALVVFIVLGLVYLMMIELVVSRYVHVLLGPHLGMIIALGIAGTSALSYAETLDEIMYASWKPVAAGILGAFSVIVLALAVLRAVRSYKFHKAAQSKFLQQVASVAQTVKNRARRERNGPRVHKRYYDAVPVDAYEDDPYRQSPRRSRHGEAEDVIYENMKY</sequence>
<reference key="1">
    <citation type="journal article" date="2006" name="J. Virol.">
        <title>Psittacid herpesvirus 1 and infectious laryngotracheitis virus: Comparative genome sequence analysis of two avian alphaherpesviruses.</title>
        <authorList>
            <person name="Thureen D.R."/>
            <person name="Keeler C.L. Jr."/>
        </authorList>
    </citation>
    <scope>NUCLEOTIDE SEQUENCE [LARGE SCALE GENOMIC DNA]</scope>
</reference>
<proteinExistence type="inferred from homology"/>
<comment type="function">
    <text evidence="1">Envelope glycoprotein important for virion assembly and egress. Plays a role in the correct incorporation of gH-gL into virion membrane. Directs the glycoprotein N (gN) to the host trans-Golgi network.</text>
</comment>
<comment type="subunit">
    <text evidence="1">Interacts (via N-terminus) with gN (via N-terminus). The gM-gN heterodimer forms the gCII complex.</text>
</comment>
<comment type="subcellular location">
    <subcellularLocation>
        <location evidence="1">Virion membrane</location>
        <topology evidence="1">Multi-pass membrane protein</topology>
    </subcellularLocation>
    <subcellularLocation>
        <location evidence="1">Host Golgi apparatus</location>
        <location evidence="1">Host trans-Golgi network</location>
    </subcellularLocation>
    <subcellularLocation>
        <location evidence="1">Host endosome membrane</location>
        <topology evidence="1">Multi-pass membrane protein</topology>
    </subcellularLocation>
    <subcellularLocation>
        <location evidence="1">Host nucleus inner membrane</location>
        <topology evidence="1">Multi-pass membrane protein</topology>
    </subcellularLocation>
    <text evidence="1">During virion morphogenesis, this protein accumulates in the trans-Golgi network where secondary envelopment occurs.</text>
</comment>
<comment type="similarity">
    <text evidence="1">Belongs to the herpesviridae glycoprotein M family.</text>
</comment>
<accession>Q6UDH4</accession>
<dbReference type="EMBL" id="AY372243">
    <property type="protein sequence ID" value="AAQ73736.1"/>
    <property type="molecule type" value="Genomic_DNA"/>
</dbReference>
<dbReference type="RefSeq" id="NP_944430.1">
    <property type="nucleotide sequence ID" value="NC_005264.1"/>
</dbReference>
<dbReference type="SMR" id="Q6UDH4"/>
<dbReference type="GeneID" id="2656970"/>
<dbReference type="KEGG" id="vg:2656970"/>
<dbReference type="Proteomes" id="UP000006840">
    <property type="component" value="Segment"/>
</dbReference>
<dbReference type="GO" id="GO:0044175">
    <property type="term" value="C:host cell endosome membrane"/>
    <property type="evidence" value="ECO:0007669"/>
    <property type="project" value="UniProtKB-SubCell"/>
</dbReference>
<dbReference type="GO" id="GO:0044177">
    <property type="term" value="C:host cell Golgi apparatus"/>
    <property type="evidence" value="ECO:0007669"/>
    <property type="project" value="UniProtKB-SubCell"/>
</dbReference>
<dbReference type="GO" id="GO:0044201">
    <property type="term" value="C:host cell nuclear inner membrane"/>
    <property type="evidence" value="ECO:0007669"/>
    <property type="project" value="UniProtKB-SubCell"/>
</dbReference>
<dbReference type="GO" id="GO:0016020">
    <property type="term" value="C:membrane"/>
    <property type="evidence" value="ECO:0007669"/>
    <property type="project" value="UniProtKB-KW"/>
</dbReference>
<dbReference type="GO" id="GO:0019031">
    <property type="term" value="C:viral envelope"/>
    <property type="evidence" value="ECO:0007669"/>
    <property type="project" value="UniProtKB-KW"/>
</dbReference>
<dbReference type="GO" id="GO:0055036">
    <property type="term" value="C:virion membrane"/>
    <property type="evidence" value="ECO:0007669"/>
    <property type="project" value="UniProtKB-SubCell"/>
</dbReference>
<dbReference type="HAMAP" id="MF_04035">
    <property type="entry name" value="HSV_GM"/>
    <property type="match status" value="1"/>
</dbReference>
<dbReference type="InterPro" id="IPR000785">
    <property type="entry name" value="Herpes_glycop_M"/>
</dbReference>
<dbReference type="Pfam" id="PF01528">
    <property type="entry name" value="Herpes_glycop"/>
    <property type="match status" value="1"/>
</dbReference>
<dbReference type="PRINTS" id="PR00333">
    <property type="entry name" value="HSVINTEGRLMP"/>
</dbReference>
<feature type="chain" id="PRO_0000406799" description="Envelope glycoprotein M">
    <location>
        <begin position="1"/>
        <end position="413"/>
    </location>
</feature>
<feature type="topological domain" description="Intravirion" evidence="1">
    <location>
        <begin position="1"/>
        <end position="19"/>
    </location>
</feature>
<feature type="transmembrane region" description="Helical" evidence="1">
    <location>
        <begin position="20"/>
        <end position="40"/>
    </location>
</feature>
<feature type="topological domain" description="Virion surface" evidence="1">
    <location>
        <begin position="41"/>
        <end position="88"/>
    </location>
</feature>
<feature type="transmembrane region" description="Helical" evidence="1">
    <location>
        <begin position="89"/>
        <end position="109"/>
    </location>
</feature>
<feature type="topological domain" description="Intravirion" evidence="1">
    <location>
        <begin position="110"/>
        <end position="133"/>
    </location>
</feature>
<feature type="transmembrane region" description="Helical" evidence="1">
    <location>
        <begin position="134"/>
        <end position="154"/>
    </location>
</feature>
<feature type="topological domain" description="Virion surface" evidence="1">
    <location>
        <begin position="155"/>
        <end position="160"/>
    </location>
</feature>
<feature type="transmembrane region" description="Helical" evidence="1">
    <location>
        <begin position="161"/>
        <end position="181"/>
    </location>
</feature>
<feature type="topological domain" description="Intravirion" evidence="1">
    <location>
        <begin position="182"/>
        <end position="218"/>
    </location>
</feature>
<feature type="transmembrane region" description="Helical" evidence="1">
    <location>
        <begin position="219"/>
        <end position="239"/>
    </location>
</feature>
<feature type="topological domain" description="Virion surface" evidence="1">
    <location>
        <begin position="240"/>
        <end position="251"/>
    </location>
</feature>
<feature type="transmembrane region" description="Helical" evidence="1">
    <location>
        <begin position="252"/>
        <end position="272"/>
    </location>
</feature>
<feature type="topological domain" description="Intravirion" evidence="1">
    <location>
        <begin position="273"/>
        <end position="277"/>
    </location>
</feature>
<feature type="transmembrane region" description="Helical" evidence="1">
    <location>
        <begin position="278"/>
        <end position="298"/>
    </location>
</feature>
<feature type="topological domain" description="Virion surface" evidence="1">
    <location>
        <begin position="299"/>
        <end position="312"/>
    </location>
</feature>
<feature type="transmembrane region" description="Helical" evidence="1">
    <location>
        <begin position="313"/>
        <end position="333"/>
    </location>
</feature>
<feature type="topological domain" description="Intravirion" evidence="1">
    <location>
        <begin position="334"/>
        <end position="413"/>
    </location>
</feature>
<feature type="disulfide bond" description="Interchain (with gN)" evidence="1">
    <location>
        <position position="51"/>
    </location>
</feature>
<protein>
    <recommendedName>
        <fullName evidence="1">Envelope glycoprotein M</fullName>
        <shortName evidence="1">gM</shortName>
    </recommendedName>
</protein>